<reference key="1">
    <citation type="journal article" date="2011" name="MBio">
        <title>Novel metabolic attributes of the genus Cyanothece, comprising a group of unicellular nitrogen-fixing Cyanobacteria.</title>
        <authorList>
            <person name="Bandyopadhyay A."/>
            <person name="Elvitigala T."/>
            <person name="Welsh E."/>
            <person name="Stockel J."/>
            <person name="Liberton M."/>
            <person name="Min H."/>
            <person name="Sherman L.A."/>
            <person name="Pakrasi H.B."/>
        </authorList>
    </citation>
    <scope>NUCLEOTIDE SEQUENCE [LARGE SCALE GENOMIC DNA]</scope>
    <source>
        <strain>PCC 7424</strain>
    </source>
</reference>
<evidence type="ECO:0000255" key="1">
    <source>
        <dbReference type="HAMAP-Rule" id="MF_00093"/>
    </source>
</evidence>
<proteinExistence type="inferred from homology"/>
<gene>
    <name evidence="1" type="primary">prfA</name>
    <name type="ordered locus">PCC7424_3733</name>
</gene>
<accession>B7KI17</accession>
<feature type="chain" id="PRO_1000117232" description="Peptide chain release factor 1">
    <location>
        <begin position="1"/>
        <end position="370"/>
    </location>
</feature>
<feature type="modified residue" description="N5-methylglutamine" evidence="1">
    <location>
        <position position="239"/>
    </location>
</feature>
<protein>
    <recommendedName>
        <fullName evidence="1">Peptide chain release factor 1</fullName>
        <shortName evidence="1">RF-1</shortName>
    </recommendedName>
</protein>
<dbReference type="EMBL" id="CP001291">
    <property type="protein sequence ID" value="ACK72114.1"/>
    <property type="molecule type" value="Genomic_DNA"/>
</dbReference>
<dbReference type="RefSeq" id="WP_015955706.1">
    <property type="nucleotide sequence ID" value="NC_011729.1"/>
</dbReference>
<dbReference type="SMR" id="B7KI17"/>
<dbReference type="STRING" id="65393.PCC7424_3733"/>
<dbReference type="KEGG" id="cyc:PCC7424_3733"/>
<dbReference type="eggNOG" id="COG0216">
    <property type="taxonomic scope" value="Bacteria"/>
</dbReference>
<dbReference type="HOGENOM" id="CLU_036856_0_1_3"/>
<dbReference type="OrthoDB" id="9806673at2"/>
<dbReference type="Proteomes" id="UP000002384">
    <property type="component" value="Chromosome"/>
</dbReference>
<dbReference type="GO" id="GO:0005737">
    <property type="term" value="C:cytoplasm"/>
    <property type="evidence" value="ECO:0007669"/>
    <property type="project" value="UniProtKB-SubCell"/>
</dbReference>
<dbReference type="GO" id="GO:0016149">
    <property type="term" value="F:translation release factor activity, codon specific"/>
    <property type="evidence" value="ECO:0007669"/>
    <property type="project" value="UniProtKB-UniRule"/>
</dbReference>
<dbReference type="FunFam" id="3.30.160.20:FF:000004">
    <property type="entry name" value="Peptide chain release factor 1"/>
    <property type="match status" value="1"/>
</dbReference>
<dbReference type="FunFam" id="3.30.70.1660:FF:000002">
    <property type="entry name" value="Peptide chain release factor 1"/>
    <property type="match status" value="1"/>
</dbReference>
<dbReference type="FunFam" id="3.30.70.1660:FF:000014">
    <property type="entry name" value="Peptide chain release factor 1"/>
    <property type="match status" value="1"/>
</dbReference>
<dbReference type="Gene3D" id="3.30.160.20">
    <property type="match status" value="1"/>
</dbReference>
<dbReference type="Gene3D" id="3.30.70.1660">
    <property type="match status" value="1"/>
</dbReference>
<dbReference type="Gene3D" id="6.10.140.1950">
    <property type="match status" value="1"/>
</dbReference>
<dbReference type="HAMAP" id="MF_00093">
    <property type="entry name" value="Rel_fac_1"/>
    <property type="match status" value="1"/>
</dbReference>
<dbReference type="InterPro" id="IPR005139">
    <property type="entry name" value="PCRF"/>
</dbReference>
<dbReference type="InterPro" id="IPR000352">
    <property type="entry name" value="Pep_chain_release_fac_I"/>
</dbReference>
<dbReference type="InterPro" id="IPR045853">
    <property type="entry name" value="Pep_chain_release_fac_I_sf"/>
</dbReference>
<dbReference type="InterPro" id="IPR050057">
    <property type="entry name" value="Prokaryotic/Mito_RF"/>
</dbReference>
<dbReference type="InterPro" id="IPR004373">
    <property type="entry name" value="RF-1"/>
</dbReference>
<dbReference type="NCBIfam" id="TIGR00019">
    <property type="entry name" value="prfA"/>
    <property type="match status" value="1"/>
</dbReference>
<dbReference type="NCBIfam" id="NF001859">
    <property type="entry name" value="PRK00591.1"/>
    <property type="match status" value="1"/>
</dbReference>
<dbReference type="PANTHER" id="PTHR43804">
    <property type="entry name" value="LD18447P"/>
    <property type="match status" value="1"/>
</dbReference>
<dbReference type="PANTHER" id="PTHR43804:SF8">
    <property type="entry name" value="PEPTIDE CHAIN RELEASE FACTOR APG3, CHLOROPLASTIC"/>
    <property type="match status" value="1"/>
</dbReference>
<dbReference type="Pfam" id="PF03462">
    <property type="entry name" value="PCRF"/>
    <property type="match status" value="1"/>
</dbReference>
<dbReference type="Pfam" id="PF00472">
    <property type="entry name" value="RF-1"/>
    <property type="match status" value="1"/>
</dbReference>
<dbReference type="SMART" id="SM00937">
    <property type="entry name" value="PCRF"/>
    <property type="match status" value="1"/>
</dbReference>
<dbReference type="SUPFAM" id="SSF75620">
    <property type="entry name" value="Release factor"/>
    <property type="match status" value="1"/>
</dbReference>
<dbReference type="PROSITE" id="PS00745">
    <property type="entry name" value="RF_PROK_I"/>
    <property type="match status" value="1"/>
</dbReference>
<name>RF1_GLOC7</name>
<organism>
    <name type="scientific">Gloeothece citriformis (strain PCC 7424)</name>
    <name type="common">Cyanothece sp. (strain PCC 7424)</name>
    <dbReference type="NCBI Taxonomy" id="65393"/>
    <lineage>
        <taxon>Bacteria</taxon>
        <taxon>Bacillati</taxon>
        <taxon>Cyanobacteriota</taxon>
        <taxon>Cyanophyceae</taxon>
        <taxon>Oscillatoriophycideae</taxon>
        <taxon>Chroococcales</taxon>
        <taxon>Aphanothecaceae</taxon>
        <taxon>Gloeothece</taxon>
        <taxon>Gloeothece citriformis</taxon>
    </lineage>
</organism>
<comment type="function">
    <text evidence="1">Peptide chain release factor 1 directs the termination of translation in response to the peptide chain termination codons UAG and UAA.</text>
</comment>
<comment type="subcellular location">
    <subcellularLocation>
        <location evidence="1">Cytoplasm</location>
    </subcellularLocation>
</comment>
<comment type="PTM">
    <text evidence="1">Methylated by PrmC. Methylation increases the termination efficiency of RF1.</text>
</comment>
<comment type="similarity">
    <text evidence="1">Belongs to the prokaryotic/mitochondrial release factor family.</text>
</comment>
<keyword id="KW-0963">Cytoplasm</keyword>
<keyword id="KW-0488">Methylation</keyword>
<keyword id="KW-0648">Protein biosynthesis</keyword>
<keyword id="KW-1185">Reference proteome</keyword>
<sequence>MAEAYLLEKLKSVEQTYKELTRRLADPDIATNPDELQRVAKARSSLEETVNTYETWQKTKEEITGARQILKEAGGDSEMREMAALEVEELEEQLEQLENKLKVLLLPRDPNDDKNIMLEIRAGTGGDEASIWAGDLVRMYSRYAESQNWVVKLVSESLADMGGFKEAILEIKGDQVYSKLKFEAGVHRVQRVPVTEAGGRVHTSTATVAIMPEVDEVEVQIDPKDIEVSTARSGGAGGQNVNKVETAVDLFHKPTGIRIFCTEERSQLQNRERAMQILRAKLYEMKLREQQEAVSSMRRSQVGTGSRSEKIRTYNYKDNRVTDHRLGQNFSLVGALEGDIEVIIQSCIGKDQQERLAELANSPETAPVLN</sequence>